<dbReference type="EC" id="1.11.1.24" evidence="1"/>
<dbReference type="EMBL" id="CP000493">
    <property type="protein sequence ID" value="ABM80100.1"/>
    <property type="molecule type" value="Genomic_DNA"/>
</dbReference>
<dbReference type="RefSeq" id="WP_011821417.1">
    <property type="nucleotide sequence ID" value="NC_008818.1"/>
</dbReference>
<dbReference type="SMR" id="A2BJD9"/>
<dbReference type="STRING" id="415426.Hbut_0228"/>
<dbReference type="EnsemblBacteria" id="ABM80100">
    <property type="protein sequence ID" value="ABM80100"/>
    <property type="gene ID" value="Hbut_0228"/>
</dbReference>
<dbReference type="GeneID" id="4782634"/>
<dbReference type="KEGG" id="hbu:Hbut_0228"/>
<dbReference type="eggNOG" id="arCOG00312">
    <property type="taxonomic scope" value="Archaea"/>
</dbReference>
<dbReference type="HOGENOM" id="CLU_042529_4_4_2"/>
<dbReference type="OrthoDB" id="6924at2157"/>
<dbReference type="Proteomes" id="UP000002593">
    <property type="component" value="Chromosome"/>
</dbReference>
<dbReference type="GO" id="GO:0005829">
    <property type="term" value="C:cytosol"/>
    <property type="evidence" value="ECO:0007669"/>
    <property type="project" value="TreeGrafter"/>
</dbReference>
<dbReference type="GO" id="GO:0008379">
    <property type="term" value="F:thioredoxin peroxidase activity"/>
    <property type="evidence" value="ECO:0007669"/>
    <property type="project" value="TreeGrafter"/>
</dbReference>
<dbReference type="GO" id="GO:0045454">
    <property type="term" value="P:cell redox homeostasis"/>
    <property type="evidence" value="ECO:0007669"/>
    <property type="project" value="TreeGrafter"/>
</dbReference>
<dbReference type="GO" id="GO:0033554">
    <property type="term" value="P:cellular response to stress"/>
    <property type="evidence" value="ECO:0007669"/>
    <property type="project" value="TreeGrafter"/>
</dbReference>
<dbReference type="GO" id="GO:0042744">
    <property type="term" value="P:hydrogen peroxide catabolic process"/>
    <property type="evidence" value="ECO:0007669"/>
    <property type="project" value="TreeGrafter"/>
</dbReference>
<dbReference type="GO" id="GO:0006979">
    <property type="term" value="P:response to oxidative stress"/>
    <property type="evidence" value="ECO:0007669"/>
    <property type="project" value="TreeGrafter"/>
</dbReference>
<dbReference type="CDD" id="cd03016">
    <property type="entry name" value="PRX_1cys"/>
    <property type="match status" value="1"/>
</dbReference>
<dbReference type="FunFam" id="3.30.1020.10:FF:000002">
    <property type="entry name" value="Peroxiredoxin"/>
    <property type="match status" value="1"/>
</dbReference>
<dbReference type="FunFam" id="3.40.30.10:FF:000011">
    <property type="entry name" value="Peroxiredoxin PRX1"/>
    <property type="match status" value="1"/>
</dbReference>
<dbReference type="Gene3D" id="3.30.1020.10">
    <property type="entry name" value="Antioxidant, Horf6, Chain A, domain2"/>
    <property type="match status" value="1"/>
</dbReference>
<dbReference type="Gene3D" id="3.40.30.10">
    <property type="entry name" value="Glutaredoxin"/>
    <property type="match status" value="1"/>
</dbReference>
<dbReference type="HAMAP" id="MF_00401">
    <property type="entry name" value="Peroxiredoxin"/>
    <property type="match status" value="1"/>
</dbReference>
<dbReference type="InterPro" id="IPR000866">
    <property type="entry name" value="AhpC/TSA"/>
</dbReference>
<dbReference type="InterPro" id="IPR050217">
    <property type="entry name" value="Peroxiredoxin"/>
</dbReference>
<dbReference type="InterPro" id="IPR024706">
    <property type="entry name" value="Peroxiredoxin_AhpC-typ"/>
</dbReference>
<dbReference type="InterPro" id="IPR019479">
    <property type="entry name" value="Peroxiredoxin_C"/>
</dbReference>
<dbReference type="InterPro" id="IPR022915">
    <property type="entry name" value="Peroxiredoxin_TDXH"/>
</dbReference>
<dbReference type="InterPro" id="IPR045020">
    <property type="entry name" value="PRX_1cys"/>
</dbReference>
<dbReference type="InterPro" id="IPR036249">
    <property type="entry name" value="Thioredoxin-like_sf"/>
</dbReference>
<dbReference type="InterPro" id="IPR013766">
    <property type="entry name" value="Thioredoxin_domain"/>
</dbReference>
<dbReference type="NCBIfam" id="NF009668">
    <property type="entry name" value="PRK13189.1"/>
    <property type="match status" value="1"/>
</dbReference>
<dbReference type="PANTHER" id="PTHR10681:SF121">
    <property type="entry name" value="ALKYL HYDROPEROXIDE REDUCTASE C"/>
    <property type="match status" value="1"/>
</dbReference>
<dbReference type="PANTHER" id="PTHR10681">
    <property type="entry name" value="THIOREDOXIN PEROXIDASE"/>
    <property type="match status" value="1"/>
</dbReference>
<dbReference type="Pfam" id="PF10417">
    <property type="entry name" value="1-cysPrx_C"/>
    <property type="match status" value="1"/>
</dbReference>
<dbReference type="Pfam" id="PF00578">
    <property type="entry name" value="AhpC-TSA"/>
    <property type="match status" value="1"/>
</dbReference>
<dbReference type="PIRSF" id="PIRSF000239">
    <property type="entry name" value="AHPC"/>
    <property type="match status" value="1"/>
</dbReference>
<dbReference type="SUPFAM" id="SSF52833">
    <property type="entry name" value="Thioredoxin-like"/>
    <property type="match status" value="1"/>
</dbReference>
<dbReference type="PROSITE" id="PS51352">
    <property type="entry name" value="THIOREDOXIN_2"/>
    <property type="match status" value="1"/>
</dbReference>
<gene>
    <name type="ordered locus">Hbut_0228</name>
</gene>
<evidence type="ECO:0000255" key="1">
    <source>
        <dbReference type="HAMAP-Rule" id="MF_00401"/>
    </source>
</evidence>
<proteinExistence type="inferred from homology"/>
<feature type="chain" id="PRO_1000049617" description="Peroxiredoxin">
    <location>
        <begin position="1"/>
        <end position="232"/>
    </location>
</feature>
<feature type="domain" description="Thioredoxin" evidence="1">
    <location>
        <begin position="6"/>
        <end position="161"/>
    </location>
</feature>
<feature type="active site" description="Cysteine sulfenic acid (-SOH) intermediate" evidence="1">
    <location>
        <position position="48"/>
    </location>
</feature>
<feature type="binding site" evidence="1">
    <location>
        <position position="124"/>
    </location>
    <ligand>
        <name>substrate</name>
    </ligand>
</feature>
<feature type="disulfide bond" description="Interchain (with C-209); in linked form" evidence="1">
    <location>
        <position position="48"/>
    </location>
</feature>
<feature type="disulfide bond" description="Alternate" evidence="1">
    <location>
        <begin position="203"/>
        <end position="209"/>
    </location>
</feature>
<feature type="disulfide bond" description="Interchain (with C-48); in linked form" evidence="1">
    <location>
        <position position="209"/>
    </location>
</feature>
<sequence>MPLQAPSIGEKFPEIEVMTTHGKIKLPDHFRGKWFVLFSHPADFTPVCTTEFVAFAKRYEDFKKLNTELIGLSVDSTFSHIKWAEWIKEKLGVEIPFPIIADPTGEVAKKLGLLHAQSSTATVRAVFVVDDKGVVRAILYYPQEVGRNIDEILRLIESLQISDKYGRAIPANWPNNELIGDNLIVPPAATVQEAEERLKKFKCFDWWFCYEDKATAEEKELARKFLKRVANC</sequence>
<keyword id="KW-0049">Antioxidant</keyword>
<keyword id="KW-0963">Cytoplasm</keyword>
<keyword id="KW-1015">Disulfide bond</keyword>
<keyword id="KW-0560">Oxidoreductase</keyword>
<keyword id="KW-0575">Peroxidase</keyword>
<keyword id="KW-0676">Redox-active center</keyword>
<keyword id="KW-1185">Reference proteome</keyword>
<comment type="function">
    <text evidence="1">Thiol-specific peroxidase that catalyzes the reduction of hydrogen peroxide and organic hydroperoxides to water and alcohols, respectively. Plays a role in cell protection against oxidative stress by detoxifying peroxides.</text>
</comment>
<comment type="catalytic activity">
    <reaction evidence="1">
        <text>a hydroperoxide + [thioredoxin]-dithiol = an alcohol + [thioredoxin]-disulfide + H2O</text>
        <dbReference type="Rhea" id="RHEA:62620"/>
        <dbReference type="Rhea" id="RHEA-COMP:10698"/>
        <dbReference type="Rhea" id="RHEA-COMP:10700"/>
        <dbReference type="ChEBI" id="CHEBI:15377"/>
        <dbReference type="ChEBI" id="CHEBI:29950"/>
        <dbReference type="ChEBI" id="CHEBI:30879"/>
        <dbReference type="ChEBI" id="CHEBI:35924"/>
        <dbReference type="ChEBI" id="CHEBI:50058"/>
        <dbReference type="EC" id="1.11.1.24"/>
    </reaction>
</comment>
<comment type="subunit">
    <text evidence="1">Homodecamer. Pentamer of dimers that assemble into a ring structure.</text>
</comment>
<comment type="subcellular location">
    <subcellularLocation>
        <location evidence="1">Cytoplasm</location>
    </subcellularLocation>
</comment>
<comment type="miscellaneous">
    <text evidence="1">The active site is a conserved redox-active cysteine residue, the peroxidatic cysteine (C(P)), which makes the nucleophilic attack on the peroxide substrate. The peroxide oxidizes the C(P)-SH to cysteine sulfenic acid (C(P)-SOH), which then reacts with another cysteine residue, the resolving cysteine (C(R)), to form a disulfide bridge. The disulfide is subsequently reduced by an appropriate electron donor to complete the catalytic cycle. Although the primary sequence of this enzyme is similar to those of the 1-Cys Prx6 enzymes, its catalytic properties resemble those of the typical 2-Cys Prxs and C(R) is provided by the other dimeric subunit to form an intersubunit disulfide. The disulfide is subsequently reduced by thioredoxin.</text>
</comment>
<comment type="similarity">
    <text evidence="1">Belongs to the peroxiredoxin family. Prx6 subfamily.</text>
</comment>
<accession>A2BJD9</accession>
<reference key="1">
    <citation type="journal article" date="2007" name="Archaea">
        <title>The genome of Hyperthermus butylicus: a sulfur-reducing, peptide fermenting, neutrophilic Crenarchaeote growing up to 108 degrees C.</title>
        <authorList>
            <person name="Bruegger K."/>
            <person name="Chen L."/>
            <person name="Stark M."/>
            <person name="Zibat A."/>
            <person name="Redder P."/>
            <person name="Ruepp A."/>
            <person name="Awayez M."/>
            <person name="She Q."/>
            <person name="Garrett R.A."/>
            <person name="Klenk H.-P."/>
        </authorList>
    </citation>
    <scope>NUCLEOTIDE SEQUENCE [LARGE SCALE GENOMIC DNA]</scope>
    <source>
        <strain>DSM 5456 / JCM 9403 / PLM1-5</strain>
    </source>
</reference>
<name>TDXH_HYPBU</name>
<protein>
    <recommendedName>
        <fullName evidence="1">Peroxiredoxin</fullName>
        <ecNumber evidence="1">1.11.1.24</ecNumber>
    </recommendedName>
    <alternativeName>
        <fullName evidence="1">Thioredoxin peroxidase</fullName>
    </alternativeName>
    <alternativeName>
        <fullName evidence="1">Thioredoxin-dependent peroxiredoxin</fullName>
    </alternativeName>
</protein>
<organism>
    <name type="scientific">Hyperthermus butylicus (strain DSM 5456 / JCM 9403 / PLM1-5)</name>
    <dbReference type="NCBI Taxonomy" id="415426"/>
    <lineage>
        <taxon>Archaea</taxon>
        <taxon>Thermoproteota</taxon>
        <taxon>Thermoprotei</taxon>
        <taxon>Desulfurococcales</taxon>
        <taxon>Pyrodictiaceae</taxon>
        <taxon>Hyperthermus</taxon>
    </lineage>
</organism>